<evidence type="ECO:0000250" key="1"/>
<evidence type="ECO:0000255" key="2"/>
<evidence type="ECO:0000269" key="3">
    <source>
    </source>
</evidence>
<evidence type="ECO:0000269" key="4">
    <source>
    </source>
</evidence>
<evidence type="ECO:0000305" key="5"/>
<dbReference type="EMBL" id="AF215016">
    <property type="protein sequence ID" value="AAG60444.1"/>
    <property type="molecule type" value="mRNA"/>
</dbReference>
<dbReference type="EMBL" id="DQ141152">
    <property type="protein sequence ID" value="AAZ83753.1"/>
    <property type="molecule type" value="mRNA"/>
</dbReference>
<dbReference type="SMR" id="P58922"/>
<dbReference type="ConoServer" id="1511">
    <property type="toxin name" value="Gla(1)-TxVI"/>
</dbReference>
<dbReference type="ConoServer" id="703">
    <property type="toxin name" value="Gla(1)-TxVI precursor"/>
</dbReference>
<dbReference type="GO" id="GO:0005576">
    <property type="term" value="C:extracellular region"/>
    <property type="evidence" value="ECO:0007669"/>
    <property type="project" value="UniProtKB-SubCell"/>
</dbReference>
<dbReference type="GO" id="GO:0008200">
    <property type="term" value="F:ion channel inhibitor activity"/>
    <property type="evidence" value="ECO:0007669"/>
    <property type="project" value="InterPro"/>
</dbReference>
<dbReference type="GO" id="GO:0090729">
    <property type="term" value="F:toxin activity"/>
    <property type="evidence" value="ECO:0007669"/>
    <property type="project" value="UniProtKB-KW"/>
</dbReference>
<dbReference type="InterPro" id="IPR004214">
    <property type="entry name" value="Conotoxin"/>
</dbReference>
<dbReference type="Pfam" id="PF02950">
    <property type="entry name" value="Conotoxin"/>
    <property type="match status" value="1"/>
</dbReference>
<protein>
    <recommendedName>
        <fullName>Conotoxin Gla(1)-TxVI</fullName>
    </recommendedName>
    <alternativeName>
        <fullName>TeA52</fullName>
    </alternativeName>
</protein>
<feature type="signal peptide" evidence="2">
    <location>
        <begin position="1"/>
        <end position="19"/>
    </location>
</feature>
<feature type="propeptide" id="PRO_0000392712" evidence="3 4">
    <location>
        <begin position="20"/>
        <end position="45"/>
    </location>
</feature>
<feature type="peptide" id="PRO_0000044879" description="Conotoxin Gla(1)-TxVI">
    <location>
        <begin position="46"/>
        <end position="76"/>
    </location>
</feature>
<feature type="modified residue" description="6'-bromotryptophan" evidence="3 4">
    <location>
        <position position="48"/>
    </location>
</feature>
<feature type="modified residue" description="4-carboxyglutamate" evidence="3 4">
    <location>
        <position position="50"/>
    </location>
</feature>
<feature type="modified residue" description="4-hydroxyproline" evidence="3 4">
    <location>
        <position position="61"/>
    </location>
</feature>
<feature type="modified residue" description="4-carboxyglutamate" evidence="3 4">
    <location>
        <position position="63"/>
    </location>
</feature>
<feature type="modified residue" description="4-carboxyglutamate" evidence="3 4">
    <location>
        <position position="67"/>
    </location>
</feature>
<feature type="modified residue" description="4-carboxyglutamate" evidence="3 4">
    <location>
        <position position="70"/>
    </location>
</feature>
<feature type="modified residue" description="6'-bromotryptophan" evidence="3 4">
    <location>
        <position position="76"/>
    </location>
</feature>
<feature type="disulfide bond" evidence="1">
    <location>
        <begin position="51"/>
        <end position="65"/>
    </location>
</feature>
<feature type="disulfide bond" evidence="1">
    <location>
        <begin position="58"/>
        <end position="69"/>
    </location>
</feature>
<feature type="disulfide bond" evidence="1">
    <location>
        <begin position="64"/>
        <end position="73"/>
    </location>
</feature>
<feature type="sequence conflict" description="In Ref. 2; AAZ83753." evidence="5" ref="2">
    <original>N</original>
    <variation>K</variation>
    <location>
        <position position="34"/>
    </location>
</feature>
<reference key="1">
    <citation type="journal article" date="2001" name="Mol. Biol. Evol.">
        <title>Mechanisms for evolving hypervariability: the case of conopeptides.</title>
        <authorList>
            <person name="Conticello S.G."/>
            <person name="Gilad Y."/>
            <person name="Avidan N."/>
            <person name="Ben-Asher E."/>
            <person name="Levy Z."/>
            <person name="Fainzilber M."/>
        </authorList>
    </citation>
    <scope>NUCLEOTIDE SEQUENCE [MRNA]</scope>
</reference>
<reference key="2">
    <citation type="submission" date="2005-07" db="EMBL/GenBank/DDBJ databases">
        <title>Novel O-superfamily conotoxins, and their coding polynucleotides and use.</title>
        <authorList>
            <person name="Luo S."/>
            <person name="Zhangsun D."/>
            <person name="Zhang B."/>
            <person name="Lin Q."/>
        </authorList>
    </citation>
    <scope>NUCLEOTIDE SEQUENCE [MRNA]</scope>
</reference>
<reference key="3">
    <citation type="journal article" date="2006" name="FEBS J.">
        <title>Novel gamma-carboxyglutamic acid-containing peptides from the venom of Conus textile.</title>
        <authorList>
            <person name="Czerwiec E."/>
            <person name="Kalume D.E."/>
            <person name="Roepstorff P."/>
            <person name="Hambe B."/>
            <person name="Furie B."/>
            <person name="Furie B.C."/>
            <person name="Stenflo J."/>
        </authorList>
    </citation>
    <scope>NUCLEOTIDE SEQUENCE [MRNA]</scope>
    <scope>PROTEIN SEQUENCE OF 46-76</scope>
    <scope>BROMINATION AT TRP-48 AND TRP-76</scope>
    <scope>HYDROXYLATION AT PRO-61</scope>
    <scope>GAMMA-CARBOXYGLUTAMATION AT GLU-50; GLU-63; GLU-67 AND GLU-70</scope>
    <scope>IDENTIFICATION BY MASS SPECTROMETRY</scope>
    <source>
        <tissue>Venom</tissue>
        <tissue>Venom gland</tissue>
    </source>
</reference>
<reference key="4">
    <citation type="journal article" date="2000" name="J. Mass Spectrom.">
        <title>Structure determination of two conotoxins from Conus textile by a combination of matrix-assisted laser desorption/ionization time-of-flight and electrospray ionization mass spectrometry and biochemical methods.</title>
        <authorList>
            <person name="Kalume D.E."/>
            <person name="Stenflo J.P."/>
            <person name="Czerwiec E."/>
            <person name="Hambe B."/>
            <person name="Furie B.C."/>
            <person name="Furie B."/>
            <person name="Roepstorff P."/>
        </authorList>
    </citation>
    <scope>PROTEIN SEQUENCE OF 46-76</scope>
    <scope>BROMINATION AT TRP-48 AND TRP-76</scope>
    <scope>HYDROXYLATION AT PRO-61</scope>
    <scope>GAMMA-CARBOXYGLUTAMATION AT GLU-50; GLU-63; GLU-67 AND GLU-70</scope>
    <scope>MASS SPECTROMETRY</scope>
    <source>
        <tissue>Venom</tissue>
    </source>
</reference>
<accession>P58922</accession>
<accession>Q3YEG1</accession>
<accession>Q9BPB8</accession>
<sequence length="76" mass="8409">MEKLTILLLVAAVLMSTQALVERAGENHSKENINFLLKRKRAADRGMWGECKDGLTTCLAPSECCSEDCEGSCTMW</sequence>
<keyword id="KW-0102">Bromination</keyword>
<keyword id="KW-0903">Direct protein sequencing</keyword>
<keyword id="KW-1015">Disulfide bond</keyword>
<keyword id="KW-0301">Gamma-carboxyglutamic acid</keyword>
<keyword id="KW-0379">Hydroxylation</keyword>
<keyword id="KW-0960">Knottin</keyword>
<keyword id="KW-0964">Secreted</keyword>
<keyword id="KW-0732">Signal</keyword>
<keyword id="KW-0800">Toxin</keyword>
<organism>
    <name type="scientific">Conus textile</name>
    <name type="common">Cloth-of-gold cone</name>
    <dbReference type="NCBI Taxonomy" id="6494"/>
    <lineage>
        <taxon>Eukaryota</taxon>
        <taxon>Metazoa</taxon>
        <taxon>Spiralia</taxon>
        <taxon>Lophotrochozoa</taxon>
        <taxon>Mollusca</taxon>
        <taxon>Gastropoda</taxon>
        <taxon>Caenogastropoda</taxon>
        <taxon>Neogastropoda</taxon>
        <taxon>Conoidea</taxon>
        <taxon>Conidae</taxon>
        <taxon>Conus</taxon>
        <taxon>Cylinder</taxon>
    </lineage>
</organism>
<name>O26G_CONTE</name>
<proteinExistence type="evidence at protein level"/>
<comment type="subcellular location">
    <subcellularLocation>
        <location>Secreted</location>
    </subcellularLocation>
</comment>
<comment type="tissue specificity">
    <text>Expressed by the venom duct.</text>
</comment>
<comment type="domain">
    <text evidence="5">The presence of a 'disulfide through disulfide knot' structurally defines this protein as a knottin.</text>
</comment>
<comment type="domain">
    <text>The cysteine framework is VI/VII (C-C-CC-C-C).</text>
</comment>
<comment type="mass spectrometry" mass="3672.78" method="MALDI" evidence="3"/>
<comment type="similarity">
    <text evidence="5">Belongs to the conotoxin O2 superfamily.</text>
</comment>